<accession>Q9XNV4</accession>
<name>CYB_LOXMI</name>
<protein>
    <recommendedName>
        <fullName>Cytochrome b</fullName>
    </recommendedName>
    <alternativeName>
        <fullName>Complex III subunit 3</fullName>
    </alternativeName>
    <alternativeName>
        <fullName>Complex III subunit III</fullName>
    </alternativeName>
    <alternativeName>
        <fullName>Cytochrome b-c1 complex subunit 3</fullName>
    </alternativeName>
    <alternativeName>
        <fullName>Ubiquinol-cytochrome-c reductase complex cytochrome b subunit</fullName>
    </alternativeName>
</protein>
<comment type="function">
    <text evidence="2">Component of the ubiquinol-cytochrome c reductase complex (complex III or cytochrome b-c1 complex) that is part of the mitochondrial respiratory chain. The b-c1 complex mediates electron transfer from ubiquinol to cytochrome c. Contributes to the generation of a proton gradient across the mitochondrial membrane that is then used for ATP synthesis.</text>
</comment>
<comment type="cofactor">
    <cofactor evidence="2">
        <name>heme b</name>
        <dbReference type="ChEBI" id="CHEBI:60344"/>
    </cofactor>
    <text evidence="2">Binds 2 heme b groups non-covalently.</text>
</comment>
<comment type="subunit">
    <text evidence="2">The cytochrome bc1 complex contains 11 subunits: 3 respiratory subunits (MT-CYB, CYC1 and UQCRFS1), 2 core proteins (UQCRC1 and UQCRC2) and 6 low-molecular weight proteins (UQCRH/QCR6, UQCRB/QCR7, UQCRQ/QCR8, UQCR10/QCR9, UQCR11/QCR10 and a cleavage product of UQCRFS1). This cytochrome bc1 complex then forms a dimer.</text>
</comment>
<comment type="subcellular location">
    <subcellularLocation>
        <location evidence="2">Mitochondrion inner membrane</location>
        <topology evidence="2">Multi-pass membrane protein</topology>
    </subcellularLocation>
</comment>
<comment type="miscellaneous">
    <text evidence="1">Heme 1 (or BL or b562) is low-potential and absorbs at about 562 nm, and heme 2 (or BH or b566) is high-potential and absorbs at about 566 nm.</text>
</comment>
<comment type="similarity">
    <text evidence="3 4">Belongs to the cytochrome b family.</text>
</comment>
<comment type="caution">
    <text evidence="2">The full-length protein contains only eight transmembrane helices, not nine as predicted by bioinformatics tools.</text>
</comment>
<feature type="chain" id="PRO_0000060651" description="Cytochrome b">
    <location>
        <begin position="1"/>
        <end position="381"/>
    </location>
</feature>
<feature type="transmembrane region" description="Helical" evidence="2">
    <location>
        <begin position="33"/>
        <end position="53"/>
    </location>
</feature>
<feature type="transmembrane region" description="Helical" evidence="2">
    <location>
        <begin position="77"/>
        <end position="98"/>
    </location>
</feature>
<feature type="transmembrane region" description="Helical" evidence="2">
    <location>
        <begin position="113"/>
        <end position="133"/>
    </location>
</feature>
<feature type="transmembrane region" description="Helical" evidence="2">
    <location>
        <begin position="178"/>
        <end position="198"/>
    </location>
</feature>
<feature type="transmembrane region" description="Helical" evidence="2">
    <location>
        <begin position="226"/>
        <end position="246"/>
    </location>
</feature>
<feature type="transmembrane region" description="Helical" evidence="2">
    <location>
        <begin position="288"/>
        <end position="308"/>
    </location>
</feature>
<feature type="transmembrane region" description="Helical" evidence="2">
    <location>
        <begin position="320"/>
        <end position="340"/>
    </location>
</feature>
<feature type="transmembrane region" description="Helical" evidence="2">
    <location>
        <begin position="347"/>
        <end position="367"/>
    </location>
</feature>
<feature type="binding site" description="axial binding residue" evidence="2">
    <location>
        <position position="83"/>
    </location>
    <ligand>
        <name>heme b</name>
        <dbReference type="ChEBI" id="CHEBI:60344"/>
        <label>b562</label>
    </ligand>
    <ligandPart>
        <name>Fe</name>
        <dbReference type="ChEBI" id="CHEBI:18248"/>
    </ligandPart>
</feature>
<feature type="binding site" description="axial binding residue" evidence="2">
    <location>
        <position position="97"/>
    </location>
    <ligand>
        <name>heme b</name>
        <dbReference type="ChEBI" id="CHEBI:60344"/>
        <label>b566</label>
    </ligand>
    <ligandPart>
        <name>Fe</name>
        <dbReference type="ChEBI" id="CHEBI:18248"/>
    </ligandPart>
</feature>
<feature type="binding site" description="axial binding residue" evidence="2">
    <location>
        <position position="182"/>
    </location>
    <ligand>
        <name>heme b</name>
        <dbReference type="ChEBI" id="CHEBI:60344"/>
        <label>b562</label>
    </ligand>
    <ligandPart>
        <name>Fe</name>
        <dbReference type="ChEBI" id="CHEBI:18248"/>
    </ligandPart>
</feature>
<feature type="binding site" description="axial binding residue" evidence="2">
    <location>
        <position position="196"/>
    </location>
    <ligand>
        <name>heme b</name>
        <dbReference type="ChEBI" id="CHEBI:60344"/>
        <label>b566</label>
    </ligand>
    <ligandPart>
        <name>Fe</name>
        <dbReference type="ChEBI" id="CHEBI:18248"/>
    </ligandPart>
</feature>
<feature type="binding site" evidence="2">
    <location>
        <position position="201"/>
    </location>
    <ligand>
        <name>a ubiquinone</name>
        <dbReference type="ChEBI" id="CHEBI:16389"/>
    </ligand>
</feature>
<sequence>MTIMRKTHPLFKIINNSFIDLPTPCNISSWWNFGSLLGVCXVMQILTGLFLAMHYTSDTATAFSSVTHICRDVNYGWLIRYMHANGASMFFICMFIHVGRGIYYGSYMLSETWNIGIILFLTTMATAFVGYVLPWGQMSFWGATVITNLLSAIPYIGTTLVEWIWGGFSVDKATLTRFFAFHFILPFIITAFVLVHLLFLHETGSNNPSGLNSESDKIPFHPYYTIKDLLGVLLLLMVLMIXVLFFPDVLGDPDNYTPANPLNTPAHIKPEWYFLFAYAILRSIPNKLGGVLALILSILILALFPLLNSSKQHGLIYRPITQTIYWIFIANLLILTWIGGQPVEYPFTMIGQIASVSYFSIIVILMPIASMIENDILKLHY</sequence>
<geneLocation type="mitochondrion"/>
<evidence type="ECO:0000250" key="1"/>
<evidence type="ECO:0000250" key="2">
    <source>
        <dbReference type="UniProtKB" id="P00157"/>
    </source>
</evidence>
<evidence type="ECO:0000255" key="3">
    <source>
        <dbReference type="PROSITE-ProRule" id="PRU00967"/>
    </source>
</evidence>
<evidence type="ECO:0000255" key="4">
    <source>
        <dbReference type="PROSITE-ProRule" id="PRU00968"/>
    </source>
</evidence>
<organism>
    <name type="scientific">Loxodontomys micropus</name>
    <name type="common">Southern big-eared mouse</name>
    <name type="synonym">Auliscomys micropus</name>
    <dbReference type="NCBI Taxonomy" id="89122"/>
    <lineage>
        <taxon>Eukaryota</taxon>
        <taxon>Metazoa</taxon>
        <taxon>Chordata</taxon>
        <taxon>Craniata</taxon>
        <taxon>Vertebrata</taxon>
        <taxon>Euteleostomi</taxon>
        <taxon>Mammalia</taxon>
        <taxon>Eutheria</taxon>
        <taxon>Euarchontoglires</taxon>
        <taxon>Glires</taxon>
        <taxon>Rodentia</taxon>
        <taxon>Myomorpha</taxon>
        <taxon>Muroidea</taxon>
        <taxon>Cricetidae</taxon>
        <taxon>Sigmodontinae</taxon>
        <taxon>Loxodontomys</taxon>
    </lineage>
</organism>
<gene>
    <name type="primary">MT-CYB</name>
    <name type="synonym">COB</name>
    <name type="synonym">CYTB</name>
    <name type="synonym">MTCYB</name>
</gene>
<reference key="1">
    <citation type="journal article" date="1999" name="J. Mammal. Evol.">
        <title>Phylogenetic relationships and the radiation of sigmodontine rodents in South America: evidence from cytochrome b.</title>
        <authorList>
            <person name="Smith M.F."/>
            <person name="Patton J.L."/>
        </authorList>
    </citation>
    <scope>NUCLEOTIDE SEQUENCE [GENOMIC DNA]</scope>
</reference>
<dbReference type="EMBL" id="AF108690">
    <property type="protein sequence ID" value="AAD45472.1"/>
    <property type="molecule type" value="Genomic_DNA"/>
</dbReference>
<dbReference type="GO" id="GO:0005743">
    <property type="term" value="C:mitochondrial inner membrane"/>
    <property type="evidence" value="ECO:0007669"/>
    <property type="project" value="UniProtKB-SubCell"/>
</dbReference>
<dbReference type="GO" id="GO:0045275">
    <property type="term" value="C:respiratory chain complex III"/>
    <property type="evidence" value="ECO:0007669"/>
    <property type="project" value="InterPro"/>
</dbReference>
<dbReference type="GO" id="GO:0046872">
    <property type="term" value="F:metal ion binding"/>
    <property type="evidence" value="ECO:0007669"/>
    <property type="project" value="UniProtKB-KW"/>
</dbReference>
<dbReference type="GO" id="GO:0008121">
    <property type="term" value="F:ubiquinol-cytochrome-c reductase activity"/>
    <property type="evidence" value="ECO:0007669"/>
    <property type="project" value="InterPro"/>
</dbReference>
<dbReference type="GO" id="GO:0006122">
    <property type="term" value="P:mitochondrial electron transport, ubiquinol to cytochrome c"/>
    <property type="evidence" value="ECO:0007669"/>
    <property type="project" value="TreeGrafter"/>
</dbReference>
<dbReference type="CDD" id="cd00290">
    <property type="entry name" value="cytochrome_b_C"/>
    <property type="match status" value="1"/>
</dbReference>
<dbReference type="CDD" id="cd00284">
    <property type="entry name" value="Cytochrome_b_N"/>
    <property type="match status" value="1"/>
</dbReference>
<dbReference type="FunFam" id="1.20.810.10:FF:000002">
    <property type="entry name" value="Cytochrome b"/>
    <property type="match status" value="1"/>
</dbReference>
<dbReference type="Gene3D" id="1.20.810.10">
    <property type="entry name" value="Cytochrome Bc1 Complex, Chain C"/>
    <property type="match status" value="1"/>
</dbReference>
<dbReference type="InterPro" id="IPR005798">
    <property type="entry name" value="Cyt_b/b6_C"/>
</dbReference>
<dbReference type="InterPro" id="IPR036150">
    <property type="entry name" value="Cyt_b/b6_C_sf"/>
</dbReference>
<dbReference type="InterPro" id="IPR005797">
    <property type="entry name" value="Cyt_b/b6_N"/>
</dbReference>
<dbReference type="InterPro" id="IPR027387">
    <property type="entry name" value="Cytb/b6-like_sf"/>
</dbReference>
<dbReference type="InterPro" id="IPR030689">
    <property type="entry name" value="Cytochrome_b"/>
</dbReference>
<dbReference type="InterPro" id="IPR048260">
    <property type="entry name" value="Cytochrome_b_C_euk/bac"/>
</dbReference>
<dbReference type="InterPro" id="IPR048259">
    <property type="entry name" value="Cytochrome_b_N_euk/bac"/>
</dbReference>
<dbReference type="InterPro" id="IPR016174">
    <property type="entry name" value="Di-haem_cyt_TM"/>
</dbReference>
<dbReference type="PANTHER" id="PTHR19271">
    <property type="entry name" value="CYTOCHROME B"/>
    <property type="match status" value="1"/>
</dbReference>
<dbReference type="PANTHER" id="PTHR19271:SF16">
    <property type="entry name" value="CYTOCHROME B"/>
    <property type="match status" value="1"/>
</dbReference>
<dbReference type="Pfam" id="PF00032">
    <property type="entry name" value="Cytochrom_B_C"/>
    <property type="match status" value="1"/>
</dbReference>
<dbReference type="Pfam" id="PF00033">
    <property type="entry name" value="Cytochrome_B"/>
    <property type="match status" value="1"/>
</dbReference>
<dbReference type="PIRSF" id="PIRSF038885">
    <property type="entry name" value="COB"/>
    <property type="match status" value="1"/>
</dbReference>
<dbReference type="SUPFAM" id="SSF81648">
    <property type="entry name" value="a domain/subunit of cytochrome bc1 complex (Ubiquinol-cytochrome c reductase)"/>
    <property type="match status" value="1"/>
</dbReference>
<dbReference type="SUPFAM" id="SSF81342">
    <property type="entry name" value="Transmembrane di-heme cytochromes"/>
    <property type="match status" value="1"/>
</dbReference>
<dbReference type="PROSITE" id="PS51003">
    <property type="entry name" value="CYTB_CTER"/>
    <property type="match status" value="1"/>
</dbReference>
<dbReference type="PROSITE" id="PS51002">
    <property type="entry name" value="CYTB_NTER"/>
    <property type="match status" value="1"/>
</dbReference>
<proteinExistence type="inferred from homology"/>
<keyword id="KW-0249">Electron transport</keyword>
<keyword id="KW-0349">Heme</keyword>
<keyword id="KW-0408">Iron</keyword>
<keyword id="KW-0472">Membrane</keyword>
<keyword id="KW-0479">Metal-binding</keyword>
<keyword id="KW-0496">Mitochondrion</keyword>
<keyword id="KW-0999">Mitochondrion inner membrane</keyword>
<keyword id="KW-0679">Respiratory chain</keyword>
<keyword id="KW-0812">Transmembrane</keyword>
<keyword id="KW-1133">Transmembrane helix</keyword>
<keyword id="KW-0813">Transport</keyword>
<keyword id="KW-0830">Ubiquinone</keyword>